<proteinExistence type="inferred from homology"/>
<sequence>MLREVIYCGICSYPPEYCEFSGKLKRCKVWLSENHADLYAKLYGTDDNTQEVEAVTNKLAESSIGEAREEKLEKDLLKIQKKQENREQRELAKKLSSKVIIKREARTKRKFIVAISGLEVFDIDMKKLAKTFASRFATGCSVSKNAEKKEEVVIQGDVMDEVETYIHSLLEEKGLKDVKVETIDAKKKKKPAAEGAAK</sequence>
<feature type="chain" id="PRO_0000320452" description="Translation machinery-associated protein 22">
    <location>
        <begin position="1"/>
        <end position="198"/>
    </location>
</feature>
<feature type="domain" description="SUI1" evidence="2">
    <location>
        <begin position="99"/>
        <end position="170"/>
    </location>
</feature>
<organism>
    <name type="scientific">Saccharomyces cerevisiae (strain YJM789)</name>
    <name type="common">Baker's yeast</name>
    <dbReference type="NCBI Taxonomy" id="307796"/>
    <lineage>
        <taxon>Eukaryota</taxon>
        <taxon>Fungi</taxon>
        <taxon>Dikarya</taxon>
        <taxon>Ascomycota</taxon>
        <taxon>Saccharomycotina</taxon>
        <taxon>Saccharomycetes</taxon>
        <taxon>Saccharomycetales</taxon>
        <taxon>Saccharomycetaceae</taxon>
        <taxon>Saccharomyces</taxon>
    </lineage>
</organism>
<accession>A6ZPY2</accession>
<protein>
    <recommendedName>
        <fullName>Translation machinery-associated protein 22</fullName>
    </recommendedName>
    <alternativeName>
        <fullName>Density-regulated protein homolog</fullName>
    </alternativeName>
</protein>
<keyword id="KW-0963">Cytoplasm</keyword>
<keyword id="KW-0687">Ribonucleoprotein</keyword>
<keyword id="KW-0689">Ribosomal protein</keyword>
<name>DENR_YEAS7</name>
<gene>
    <name type="primary">TMA22</name>
    <name type="synonym">RBF22</name>
    <name type="ORF">SCY_2943</name>
</gene>
<reference key="1">
    <citation type="journal article" date="2007" name="Proc. Natl. Acad. Sci. U.S.A.">
        <title>Genome sequencing and comparative analysis of Saccharomyces cerevisiae strain YJM789.</title>
        <authorList>
            <person name="Wei W."/>
            <person name="McCusker J.H."/>
            <person name="Hyman R.W."/>
            <person name="Jones T."/>
            <person name="Ning Y."/>
            <person name="Cao Z."/>
            <person name="Gu Z."/>
            <person name="Bruno D."/>
            <person name="Miranda M."/>
            <person name="Nguyen M."/>
            <person name="Wilhelmy J."/>
            <person name="Komp C."/>
            <person name="Tamse R."/>
            <person name="Wang X."/>
            <person name="Jia P."/>
            <person name="Luedi P."/>
            <person name="Oefner P.J."/>
            <person name="David L."/>
            <person name="Dietrich F.S."/>
            <person name="Li Y."/>
            <person name="Davis R.W."/>
            <person name="Steinmetz L.M."/>
        </authorList>
    </citation>
    <scope>NUCLEOTIDE SEQUENCE [LARGE SCALE GENOMIC DNA]</scope>
    <source>
        <strain>YJM789</strain>
    </source>
</reference>
<evidence type="ECO:0000250" key="1"/>
<evidence type="ECO:0000255" key="2">
    <source>
        <dbReference type="PROSITE-ProRule" id="PRU00200"/>
    </source>
</evidence>
<evidence type="ECO:0000305" key="3"/>
<dbReference type="EMBL" id="AAFW02000040">
    <property type="protein sequence ID" value="EDN63342.1"/>
    <property type="molecule type" value="Genomic_DNA"/>
</dbReference>
<dbReference type="SMR" id="A6ZPY2"/>
<dbReference type="IntAct" id="A6ZPY2">
    <property type="interactions" value="2"/>
</dbReference>
<dbReference type="MINT" id="A6ZPY2"/>
<dbReference type="HOGENOM" id="CLU_073511_0_1_1"/>
<dbReference type="Proteomes" id="UP000007060">
    <property type="component" value="Unassembled WGS sequence"/>
</dbReference>
<dbReference type="GO" id="GO:0005737">
    <property type="term" value="C:cytoplasm"/>
    <property type="evidence" value="ECO:0007669"/>
    <property type="project" value="UniProtKB-SubCell"/>
</dbReference>
<dbReference type="GO" id="GO:1990904">
    <property type="term" value="C:ribonucleoprotein complex"/>
    <property type="evidence" value="ECO:0007669"/>
    <property type="project" value="UniProtKB-KW"/>
</dbReference>
<dbReference type="GO" id="GO:0005840">
    <property type="term" value="C:ribosome"/>
    <property type="evidence" value="ECO:0007669"/>
    <property type="project" value="UniProtKB-KW"/>
</dbReference>
<dbReference type="GO" id="GO:0003729">
    <property type="term" value="F:mRNA binding"/>
    <property type="evidence" value="ECO:0007669"/>
    <property type="project" value="TreeGrafter"/>
</dbReference>
<dbReference type="GO" id="GO:0003743">
    <property type="term" value="F:translation initiation factor activity"/>
    <property type="evidence" value="ECO:0007669"/>
    <property type="project" value="InterPro"/>
</dbReference>
<dbReference type="GO" id="GO:0001731">
    <property type="term" value="P:formation of translation preinitiation complex"/>
    <property type="evidence" value="ECO:0007669"/>
    <property type="project" value="TreeGrafter"/>
</dbReference>
<dbReference type="GO" id="GO:0002188">
    <property type="term" value="P:translation reinitiation"/>
    <property type="evidence" value="ECO:0007669"/>
    <property type="project" value="TreeGrafter"/>
</dbReference>
<dbReference type="CDD" id="cd11607">
    <property type="entry name" value="DENR_C"/>
    <property type="match status" value="1"/>
</dbReference>
<dbReference type="FunFam" id="3.30.780.10:FF:000013">
    <property type="entry name" value="Translation machinery-associated protein 22"/>
    <property type="match status" value="1"/>
</dbReference>
<dbReference type="Gene3D" id="3.30.780.10">
    <property type="entry name" value="SUI1-like domain"/>
    <property type="match status" value="1"/>
</dbReference>
<dbReference type="InterPro" id="IPR050318">
    <property type="entry name" value="DENR/SUI1_TIF"/>
</dbReference>
<dbReference type="InterPro" id="IPR046447">
    <property type="entry name" value="DENR_C"/>
</dbReference>
<dbReference type="InterPro" id="IPR005873">
    <property type="entry name" value="DENR_eukaryotes"/>
</dbReference>
<dbReference type="InterPro" id="IPR048517">
    <property type="entry name" value="DENR_N"/>
</dbReference>
<dbReference type="InterPro" id="IPR001950">
    <property type="entry name" value="SUI1"/>
</dbReference>
<dbReference type="InterPro" id="IPR036877">
    <property type="entry name" value="SUI1_dom_sf"/>
</dbReference>
<dbReference type="NCBIfam" id="TIGR01159">
    <property type="entry name" value="DRP1"/>
    <property type="match status" value="1"/>
</dbReference>
<dbReference type="PANTHER" id="PTHR12789:SF0">
    <property type="entry name" value="DENSITY-REGULATED PROTEIN"/>
    <property type="match status" value="1"/>
</dbReference>
<dbReference type="PANTHER" id="PTHR12789">
    <property type="entry name" value="DENSITY-REGULATED PROTEIN HOMOLOG"/>
    <property type="match status" value="1"/>
</dbReference>
<dbReference type="Pfam" id="PF21023">
    <property type="entry name" value="DENR_N"/>
    <property type="match status" value="1"/>
</dbReference>
<dbReference type="Pfam" id="PF01253">
    <property type="entry name" value="SUI1"/>
    <property type="match status" value="1"/>
</dbReference>
<dbReference type="SUPFAM" id="SSF55159">
    <property type="entry name" value="eIF1-like"/>
    <property type="match status" value="1"/>
</dbReference>
<dbReference type="PROSITE" id="PS50296">
    <property type="entry name" value="SUI1"/>
    <property type="match status" value="1"/>
</dbReference>
<comment type="subunit">
    <text evidence="1">Interacts with the 40S ribosomal subunit.</text>
</comment>
<comment type="subcellular location">
    <subcellularLocation>
        <location evidence="1">Cytoplasm</location>
    </subcellularLocation>
</comment>
<comment type="domain">
    <text>The SUI1 domain may be involved in RNA binding.</text>
</comment>
<comment type="similarity">
    <text evidence="3">Belongs to the DENR family.</text>
</comment>